<reference key="1">
    <citation type="journal article" date="2007" name="Environ. Microbiol.">
        <title>Whole-genome analysis of the ammonia-oxidizing bacterium, Nitrosomonas eutropha C91: implications for niche adaptation.</title>
        <authorList>
            <person name="Stein L.Y."/>
            <person name="Arp D.J."/>
            <person name="Berube P.M."/>
            <person name="Chain P.S."/>
            <person name="Hauser L."/>
            <person name="Jetten M.S."/>
            <person name="Klotz M.G."/>
            <person name="Larimer F.W."/>
            <person name="Norton J.M."/>
            <person name="Op den Camp H.J.M."/>
            <person name="Shin M."/>
            <person name="Wei X."/>
        </authorList>
    </citation>
    <scope>NUCLEOTIDE SEQUENCE [LARGE SCALE GENOMIC DNA]</scope>
    <source>
        <strain>DSM 101675 / C91 / Nm57</strain>
    </source>
</reference>
<organism>
    <name type="scientific">Nitrosomonas eutropha (strain DSM 101675 / C91 / Nm57)</name>
    <dbReference type="NCBI Taxonomy" id="335283"/>
    <lineage>
        <taxon>Bacteria</taxon>
        <taxon>Pseudomonadati</taxon>
        <taxon>Pseudomonadota</taxon>
        <taxon>Betaproteobacteria</taxon>
        <taxon>Nitrosomonadales</taxon>
        <taxon>Nitrosomonadaceae</taxon>
        <taxon>Nitrosomonas</taxon>
    </lineage>
</organism>
<comment type="catalytic activity">
    <reaction evidence="1">
        <text>2-(N(omega)-L-arginino)succinate = fumarate + L-arginine</text>
        <dbReference type="Rhea" id="RHEA:24020"/>
        <dbReference type="ChEBI" id="CHEBI:29806"/>
        <dbReference type="ChEBI" id="CHEBI:32682"/>
        <dbReference type="ChEBI" id="CHEBI:57472"/>
        <dbReference type="EC" id="4.3.2.1"/>
    </reaction>
</comment>
<comment type="pathway">
    <text evidence="1">Amino-acid biosynthesis; L-arginine biosynthesis; L-arginine from L-ornithine and carbamoyl phosphate: step 3/3.</text>
</comment>
<comment type="subcellular location">
    <subcellularLocation>
        <location evidence="1">Cytoplasm</location>
    </subcellularLocation>
</comment>
<comment type="similarity">
    <text evidence="1">Belongs to the lyase 1 family. Argininosuccinate lyase subfamily.</text>
</comment>
<dbReference type="EC" id="4.3.2.1" evidence="1"/>
<dbReference type="EMBL" id="CP000450">
    <property type="protein sequence ID" value="ABI59521.1"/>
    <property type="molecule type" value="Genomic_DNA"/>
</dbReference>
<dbReference type="RefSeq" id="WP_011634340.1">
    <property type="nucleotide sequence ID" value="NC_008344.1"/>
</dbReference>
<dbReference type="SMR" id="Q0AGL1"/>
<dbReference type="STRING" id="335283.Neut_1269"/>
<dbReference type="KEGG" id="net:Neut_1269"/>
<dbReference type="eggNOG" id="COG0165">
    <property type="taxonomic scope" value="Bacteria"/>
</dbReference>
<dbReference type="HOGENOM" id="CLU_027272_2_3_4"/>
<dbReference type="OrthoDB" id="9769623at2"/>
<dbReference type="UniPathway" id="UPA00068">
    <property type="reaction ID" value="UER00114"/>
</dbReference>
<dbReference type="Proteomes" id="UP000001966">
    <property type="component" value="Chromosome"/>
</dbReference>
<dbReference type="GO" id="GO:0005829">
    <property type="term" value="C:cytosol"/>
    <property type="evidence" value="ECO:0007669"/>
    <property type="project" value="TreeGrafter"/>
</dbReference>
<dbReference type="GO" id="GO:0004056">
    <property type="term" value="F:argininosuccinate lyase activity"/>
    <property type="evidence" value="ECO:0007669"/>
    <property type="project" value="UniProtKB-UniRule"/>
</dbReference>
<dbReference type="GO" id="GO:0042450">
    <property type="term" value="P:arginine biosynthetic process via ornithine"/>
    <property type="evidence" value="ECO:0007669"/>
    <property type="project" value="InterPro"/>
</dbReference>
<dbReference type="GO" id="GO:0006526">
    <property type="term" value="P:L-arginine biosynthetic process"/>
    <property type="evidence" value="ECO:0007669"/>
    <property type="project" value="UniProtKB-UniRule"/>
</dbReference>
<dbReference type="CDD" id="cd01359">
    <property type="entry name" value="Argininosuccinate_lyase"/>
    <property type="match status" value="1"/>
</dbReference>
<dbReference type="FunFam" id="1.10.275.10:FF:000002">
    <property type="entry name" value="Argininosuccinate lyase"/>
    <property type="match status" value="1"/>
</dbReference>
<dbReference type="FunFam" id="1.10.40.30:FF:000001">
    <property type="entry name" value="Argininosuccinate lyase"/>
    <property type="match status" value="1"/>
</dbReference>
<dbReference type="FunFam" id="1.20.200.10:FF:000015">
    <property type="entry name" value="argininosuccinate lyase isoform X2"/>
    <property type="match status" value="1"/>
</dbReference>
<dbReference type="Gene3D" id="1.10.40.30">
    <property type="entry name" value="Fumarase/aspartase (C-terminal domain)"/>
    <property type="match status" value="1"/>
</dbReference>
<dbReference type="Gene3D" id="1.20.200.10">
    <property type="entry name" value="Fumarase/aspartase (Central domain)"/>
    <property type="match status" value="1"/>
</dbReference>
<dbReference type="Gene3D" id="1.10.275.10">
    <property type="entry name" value="Fumarase/aspartase (N-terminal domain)"/>
    <property type="match status" value="1"/>
</dbReference>
<dbReference type="HAMAP" id="MF_00006">
    <property type="entry name" value="Arg_succ_lyase"/>
    <property type="match status" value="1"/>
</dbReference>
<dbReference type="InterPro" id="IPR029419">
    <property type="entry name" value="Arg_succ_lyase_C"/>
</dbReference>
<dbReference type="InterPro" id="IPR009049">
    <property type="entry name" value="Argininosuccinate_lyase"/>
</dbReference>
<dbReference type="InterPro" id="IPR024083">
    <property type="entry name" value="Fumarase/histidase_N"/>
</dbReference>
<dbReference type="InterPro" id="IPR020557">
    <property type="entry name" value="Fumarate_lyase_CS"/>
</dbReference>
<dbReference type="InterPro" id="IPR000362">
    <property type="entry name" value="Fumarate_lyase_fam"/>
</dbReference>
<dbReference type="InterPro" id="IPR022761">
    <property type="entry name" value="Fumarate_lyase_N"/>
</dbReference>
<dbReference type="InterPro" id="IPR008948">
    <property type="entry name" value="L-Aspartase-like"/>
</dbReference>
<dbReference type="NCBIfam" id="TIGR00838">
    <property type="entry name" value="argH"/>
    <property type="match status" value="1"/>
</dbReference>
<dbReference type="PANTHER" id="PTHR43814">
    <property type="entry name" value="ARGININOSUCCINATE LYASE"/>
    <property type="match status" value="1"/>
</dbReference>
<dbReference type="PANTHER" id="PTHR43814:SF1">
    <property type="entry name" value="ARGININOSUCCINATE LYASE"/>
    <property type="match status" value="1"/>
</dbReference>
<dbReference type="Pfam" id="PF14698">
    <property type="entry name" value="ASL_C2"/>
    <property type="match status" value="1"/>
</dbReference>
<dbReference type="Pfam" id="PF00206">
    <property type="entry name" value="Lyase_1"/>
    <property type="match status" value="1"/>
</dbReference>
<dbReference type="PRINTS" id="PR00145">
    <property type="entry name" value="ARGSUCLYASE"/>
</dbReference>
<dbReference type="PRINTS" id="PR00149">
    <property type="entry name" value="FUMRATELYASE"/>
</dbReference>
<dbReference type="SUPFAM" id="SSF48557">
    <property type="entry name" value="L-aspartase-like"/>
    <property type="match status" value="1"/>
</dbReference>
<dbReference type="PROSITE" id="PS00163">
    <property type="entry name" value="FUMARATE_LYASES"/>
    <property type="match status" value="1"/>
</dbReference>
<sequence>MEKDKKTWSGRFSEPVALLVQRYTASVGFDYRLAEYDIQGSFAHARMLAATNIIPQTDLEAIEKGLTQIWEEIKNGQFEWQLEQEDVHLNIERRLTALTGDAGKRLHTARSRNDQVATDIRLYLRAAIDEIIDLIYGLQYVLLDLAEQHAATIMPGFTHLQVAQPVSFGHHLLAYYEMLLRDGQRLQDCRKRVNQLPLGAAALAGTSYPIDREQVARELGFDDICHNSLDAVSDRDFAIEFCASAALIMMHLSRLSEELILWMSPAFGFIRIADRFCTGSSIMPQKKNPDVPELVRGKTGRINGHLVALLTLMKSQPLAYNKDNQEDKEPLFDTVDTLKDTLTIYADMLAGLQVNPQAMRQAALRGYATATDLADYLVKKGTPFRDAHETVAQAVRFAENKRCDLGELSLADLQQFSAIIEQDVFEVLTLEGSLQSRNHPGGTAPEQVRAAICRARSQLPD</sequence>
<feature type="chain" id="PRO_1000000514" description="Argininosuccinate lyase">
    <location>
        <begin position="1"/>
        <end position="461"/>
    </location>
</feature>
<accession>Q0AGL1</accession>
<evidence type="ECO:0000255" key="1">
    <source>
        <dbReference type="HAMAP-Rule" id="MF_00006"/>
    </source>
</evidence>
<name>ARLY_NITEC</name>
<protein>
    <recommendedName>
        <fullName evidence="1">Argininosuccinate lyase</fullName>
        <shortName evidence="1">ASAL</shortName>
        <ecNumber evidence="1">4.3.2.1</ecNumber>
    </recommendedName>
    <alternativeName>
        <fullName evidence="1">Arginosuccinase</fullName>
    </alternativeName>
</protein>
<keyword id="KW-0028">Amino-acid biosynthesis</keyword>
<keyword id="KW-0055">Arginine biosynthesis</keyword>
<keyword id="KW-0963">Cytoplasm</keyword>
<keyword id="KW-0456">Lyase</keyword>
<proteinExistence type="inferred from homology"/>
<gene>
    <name evidence="1" type="primary">argH</name>
    <name type="ordered locus">Neut_1269</name>
</gene>